<name>ABCD4_HUMAN</name>
<dbReference type="EC" id="7.6.2.8" evidence="12 19 20"/>
<dbReference type="EMBL" id="Y14318">
    <property type="protein sequence ID" value="CAA74699.1"/>
    <property type="molecule type" value="Genomic_DNA"/>
</dbReference>
<dbReference type="EMBL" id="Y14319">
    <property type="protein sequence ID" value="CAA74699.1"/>
    <property type="status" value="JOINED"/>
    <property type="molecule type" value="Genomic_DNA"/>
</dbReference>
<dbReference type="EMBL" id="Y14320">
    <property type="protein sequence ID" value="CAA74699.1"/>
    <property type="status" value="JOINED"/>
    <property type="molecule type" value="Genomic_DNA"/>
</dbReference>
<dbReference type="EMBL" id="Y14321">
    <property type="protein sequence ID" value="CAA74699.1"/>
    <property type="status" value="JOINED"/>
    <property type="molecule type" value="Genomic_DNA"/>
</dbReference>
<dbReference type="EMBL" id="Y14322">
    <property type="protein sequence ID" value="CAA74699.1"/>
    <property type="status" value="JOINED"/>
    <property type="molecule type" value="Genomic_DNA"/>
</dbReference>
<dbReference type="EMBL" id="Y14323">
    <property type="protein sequence ID" value="CAA74699.1"/>
    <property type="status" value="JOINED"/>
    <property type="molecule type" value="Genomic_DNA"/>
</dbReference>
<dbReference type="EMBL" id="AF009746">
    <property type="protein sequence ID" value="AAB83967.1"/>
    <property type="molecule type" value="mRNA"/>
</dbReference>
<dbReference type="EMBL" id="BT007412">
    <property type="protein sequence ID" value="AAP36080.1"/>
    <property type="molecule type" value="mRNA"/>
</dbReference>
<dbReference type="EMBL" id="AK291332">
    <property type="protein sequence ID" value="BAF84021.1"/>
    <property type="molecule type" value="mRNA"/>
</dbReference>
<dbReference type="EMBL" id="CR457104">
    <property type="protein sequence ID" value="CAG33385.1"/>
    <property type="molecule type" value="mRNA"/>
</dbReference>
<dbReference type="EMBL" id="BC012815">
    <property type="protein sequence ID" value="AAH12815.1"/>
    <property type="molecule type" value="mRNA"/>
</dbReference>
<dbReference type="CCDS" id="CCDS9828.1"/>
<dbReference type="PIR" id="JC5604">
    <property type="entry name" value="JC5604"/>
</dbReference>
<dbReference type="RefSeq" id="NP_005041.1">
    <property type="nucleotide sequence ID" value="NM_005050.4"/>
</dbReference>
<dbReference type="PDB" id="6JBJ">
    <property type="method" value="EM"/>
    <property type="resolution" value="3.60 A"/>
    <property type="chains" value="A/B=2-606"/>
</dbReference>
<dbReference type="PDBsum" id="6JBJ"/>
<dbReference type="EMDB" id="EMD-9791"/>
<dbReference type="SMR" id="O14678"/>
<dbReference type="BioGRID" id="111784">
    <property type="interactions" value="41"/>
</dbReference>
<dbReference type="CORUM" id="O14678"/>
<dbReference type="FunCoup" id="O14678">
    <property type="interactions" value="1068"/>
</dbReference>
<dbReference type="IntAct" id="O14678">
    <property type="interactions" value="40"/>
</dbReference>
<dbReference type="STRING" id="9606.ENSP00000349396"/>
<dbReference type="TCDB" id="3.A.1.203.9">
    <property type="family name" value="the atp-binding cassette (abc) superfamily"/>
</dbReference>
<dbReference type="iPTMnet" id="O14678"/>
<dbReference type="PhosphoSitePlus" id="O14678"/>
<dbReference type="BioMuta" id="ABCD4"/>
<dbReference type="jPOST" id="O14678"/>
<dbReference type="MassIVE" id="O14678"/>
<dbReference type="PaxDb" id="9606-ENSP00000349396"/>
<dbReference type="PeptideAtlas" id="O14678"/>
<dbReference type="ProteomicsDB" id="48163"/>
<dbReference type="Pumba" id="O14678"/>
<dbReference type="Antibodypedia" id="184">
    <property type="antibodies" value="232 antibodies from 29 providers"/>
</dbReference>
<dbReference type="DNASU" id="5826"/>
<dbReference type="Ensembl" id="ENST00000356924.9">
    <property type="protein sequence ID" value="ENSP00000349396.4"/>
    <property type="gene ID" value="ENSG00000119688.21"/>
</dbReference>
<dbReference type="GeneID" id="5826"/>
<dbReference type="KEGG" id="hsa:5826"/>
<dbReference type="MANE-Select" id="ENST00000356924.9">
    <property type="protein sequence ID" value="ENSP00000349396.4"/>
    <property type="RefSeq nucleotide sequence ID" value="NM_005050.4"/>
    <property type="RefSeq protein sequence ID" value="NP_005041.1"/>
</dbReference>
<dbReference type="UCSC" id="uc001xpr.3">
    <property type="organism name" value="human"/>
</dbReference>
<dbReference type="AGR" id="HGNC:68"/>
<dbReference type="CTD" id="5826"/>
<dbReference type="DisGeNET" id="5826"/>
<dbReference type="GeneCards" id="ABCD4"/>
<dbReference type="GeneReviews" id="ABCD4"/>
<dbReference type="HGNC" id="HGNC:68">
    <property type="gene designation" value="ABCD4"/>
</dbReference>
<dbReference type="HPA" id="ENSG00000119688">
    <property type="expression patterns" value="Low tissue specificity"/>
</dbReference>
<dbReference type="MalaCards" id="ABCD4"/>
<dbReference type="MIM" id="603214">
    <property type="type" value="gene"/>
</dbReference>
<dbReference type="MIM" id="614857">
    <property type="type" value="phenotype"/>
</dbReference>
<dbReference type="neXtProt" id="NX_O14678"/>
<dbReference type="OpenTargets" id="ENSG00000119688"/>
<dbReference type="Orphanet" id="369955">
    <property type="disease" value="Methylmalonic acidemia with homocystinuria, type cblJ"/>
</dbReference>
<dbReference type="PharmGKB" id="PA24403"/>
<dbReference type="VEuPathDB" id="HostDB:ENSG00000119688"/>
<dbReference type="eggNOG" id="KOG0060">
    <property type="taxonomic scope" value="Eukaryota"/>
</dbReference>
<dbReference type="GeneTree" id="ENSGT00950000182955"/>
<dbReference type="HOGENOM" id="CLU_007587_7_0_1"/>
<dbReference type="InParanoid" id="O14678"/>
<dbReference type="OMA" id="KQFHDME"/>
<dbReference type="OrthoDB" id="422637at2759"/>
<dbReference type="PAN-GO" id="O14678">
    <property type="GO annotations" value="8 GO annotations based on evolutionary models"/>
</dbReference>
<dbReference type="PhylomeDB" id="O14678"/>
<dbReference type="TreeFam" id="TF105205"/>
<dbReference type="BRENDA" id="7.6.2.8">
    <property type="organism ID" value="2681"/>
</dbReference>
<dbReference type="PathwayCommons" id="O14678"/>
<dbReference type="Reactome" id="R-HSA-5683329">
    <property type="pathway name" value="Defective ABCD4 causes MAHCJ"/>
</dbReference>
<dbReference type="Reactome" id="R-HSA-9758881">
    <property type="pathway name" value="Uptake of dietary cobalamins into enterocytes"/>
</dbReference>
<dbReference type="Reactome" id="R-HSA-9758890">
    <property type="pathway name" value="Transport of RCbl within the body"/>
</dbReference>
<dbReference type="SignaLink" id="O14678"/>
<dbReference type="BioGRID-ORCS" id="5826">
    <property type="hits" value="31 hits in 1153 CRISPR screens"/>
</dbReference>
<dbReference type="ChiTaRS" id="ABCD4">
    <property type="organism name" value="human"/>
</dbReference>
<dbReference type="GeneWiki" id="ABCD4"/>
<dbReference type="GenomeRNAi" id="5826"/>
<dbReference type="Pharos" id="O14678">
    <property type="development level" value="Tbio"/>
</dbReference>
<dbReference type="PRO" id="PR:O14678"/>
<dbReference type="Proteomes" id="UP000005640">
    <property type="component" value="Chromosome 14"/>
</dbReference>
<dbReference type="RNAct" id="O14678">
    <property type="molecule type" value="protein"/>
</dbReference>
<dbReference type="Bgee" id="ENSG00000119688">
    <property type="expression patterns" value="Expressed in right uterine tube and 178 other cell types or tissues"/>
</dbReference>
<dbReference type="ExpressionAtlas" id="O14678">
    <property type="expression patterns" value="baseline and differential"/>
</dbReference>
<dbReference type="GO" id="GO:0043190">
    <property type="term" value="C:ATP-binding cassette (ABC) transporter complex"/>
    <property type="evidence" value="ECO:0000303"/>
    <property type="project" value="UniProtKB"/>
</dbReference>
<dbReference type="GO" id="GO:0005789">
    <property type="term" value="C:endoplasmic reticulum membrane"/>
    <property type="evidence" value="ECO:0000314"/>
    <property type="project" value="UniProtKB"/>
</dbReference>
<dbReference type="GO" id="GO:0005765">
    <property type="term" value="C:lysosomal membrane"/>
    <property type="evidence" value="ECO:0000314"/>
    <property type="project" value="UniProtKB"/>
</dbReference>
<dbReference type="GO" id="GO:0016020">
    <property type="term" value="C:membrane"/>
    <property type="evidence" value="ECO:0000303"/>
    <property type="project" value="UniProtKB"/>
</dbReference>
<dbReference type="GO" id="GO:0005778">
    <property type="term" value="C:peroxisomal membrane"/>
    <property type="evidence" value="ECO:0000318"/>
    <property type="project" value="GO_Central"/>
</dbReference>
<dbReference type="GO" id="GO:0005777">
    <property type="term" value="C:peroxisome"/>
    <property type="evidence" value="ECO:0000314"/>
    <property type="project" value="UniProtKB"/>
</dbReference>
<dbReference type="GO" id="GO:0015420">
    <property type="term" value="F:ABC-type vitamin B12 transporter activity"/>
    <property type="evidence" value="ECO:0000314"/>
    <property type="project" value="MGI"/>
</dbReference>
<dbReference type="GO" id="GO:0005524">
    <property type="term" value="F:ATP binding"/>
    <property type="evidence" value="ECO:0000318"/>
    <property type="project" value="GO_Central"/>
</dbReference>
<dbReference type="GO" id="GO:0016887">
    <property type="term" value="F:ATP hydrolysis activity"/>
    <property type="evidence" value="ECO:0007669"/>
    <property type="project" value="InterPro"/>
</dbReference>
<dbReference type="GO" id="GO:0042626">
    <property type="term" value="F:ATPase-coupled transmembrane transporter activity"/>
    <property type="evidence" value="ECO:0000318"/>
    <property type="project" value="GO_Central"/>
</dbReference>
<dbReference type="GO" id="GO:0042802">
    <property type="term" value="F:identical protein binding"/>
    <property type="evidence" value="ECO:0000353"/>
    <property type="project" value="IntAct"/>
</dbReference>
<dbReference type="GO" id="GO:0005324">
    <property type="term" value="F:long-chain fatty acid transmembrane transporter activity"/>
    <property type="evidence" value="ECO:0000318"/>
    <property type="project" value="GO_Central"/>
</dbReference>
<dbReference type="GO" id="GO:1990830">
    <property type="term" value="P:cellular response to leukemia inhibitory factor"/>
    <property type="evidence" value="ECO:0007669"/>
    <property type="project" value="Ensembl"/>
</dbReference>
<dbReference type="GO" id="GO:0009235">
    <property type="term" value="P:cobalamin metabolic process"/>
    <property type="evidence" value="ECO:0000314"/>
    <property type="project" value="MGI"/>
</dbReference>
<dbReference type="GO" id="GO:0015889">
    <property type="term" value="P:cobalamin transport"/>
    <property type="evidence" value="ECO:0000315"/>
    <property type="project" value="UniProtKB"/>
</dbReference>
<dbReference type="GO" id="GO:0006635">
    <property type="term" value="P:fatty acid beta-oxidation"/>
    <property type="evidence" value="ECO:0000318"/>
    <property type="project" value="GO_Central"/>
</dbReference>
<dbReference type="GO" id="GO:0015910">
    <property type="term" value="P:long-chain fatty acid import into peroxisome"/>
    <property type="evidence" value="ECO:0000318"/>
    <property type="project" value="GO_Central"/>
</dbReference>
<dbReference type="GO" id="GO:0007031">
    <property type="term" value="P:peroxisome organization"/>
    <property type="evidence" value="ECO:0000318"/>
    <property type="project" value="GO_Central"/>
</dbReference>
<dbReference type="GO" id="GO:0055085">
    <property type="term" value="P:transmembrane transport"/>
    <property type="evidence" value="ECO:0000303"/>
    <property type="project" value="UniProtKB"/>
</dbReference>
<dbReference type="GO" id="GO:0042760">
    <property type="term" value="P:very long-chain fatty acid catabolic process"/>
    <property type="evidence" value="ECO:0000318"/>
    <property type="project" value="GO_Central"/>
</dbReference>
<dbReference type="CDD" id="cd03223">
    <property type="entry name" value="ABCD_peroxisomal_ALDP"/>
    <property type="match status" value="1"/>
</dbReference>
<dbReference type="FunFam" id="1.20.1560.10:FF:000064">
    <property type="entry name" value="ATP-binding cassette sub-family D member 4"/>
    <property type="match status" value="1"/>
</dbReference>
<dbReference type="FunFam" id="3.40.50.300:FF:001178">
    <property type="entry name" value="ATP-binding cassette sub-family D member 4 isoform X1"/>
    <property type="match status" value="1"/>
</dbReference>
<dbReference type="Gene3D" id="1.20.1560.10">
    <property type="entry name" value="ABC transporter type 1, transmembrane domain"/>
    <property type="match status" value="1"/>
</dbReference>
<dbReference type="Gene3D" id="3.40.50.300">
    <property type="entry name" value="P-loop containing nucleotide triphosphate hydrolases"/>
    <property type="match status" value="1"/>
</dbReference>
<dbReference type="InterPro" id="IPR003593">
    <property type="entry name" value="AAA+_ATPase"/>
</dbReference>
<dbReference type="InterPro" id="IPR011527">
    <property type="entry name" value="ABC1_TM_dom"/>
</dbReference>
<dbReference type="InterPro" id="IPR036640">
    <property type="entry name" value="ABC1_TM_sf"/>
</dbReference>
<dbReference type="InterPro" id="IPR003439">
    <property type="entry name" value="ABC_transporter-like_ATP-bd"/>
</dbReference>
<dbReference type="InterPro" id="IPR017871">
    <property type="entry name" value="ABC_transporter-like_CS"/>
</dbReference>
<dbReference type="InterPro" id="IPR050835">
    <property type="entry name" value="ABC_transporter_sub-D"/>
</dbReference>
<dbReference type="InterPro" id="IPR027417">
    <property type="entry name" value="P-loop_NTPase"/>
</dbReference>
<dbReference type="PANTHER" id="PTHR11384">
    <property type="entry name" value="ATP-BINDING CASSETTE, SUB-FAMILY D MEMBER"/>
    <property type="match status" value="1"/>
</dbReference>
<dbReference type="PANTHER" id="PTHR11384:SF59">
    <property type="entry name" value="LYSOSOMAL COBALAMIN TRANSPORTER ABCD4"/>
    <property type="match status" value="1"/>
</dbReference>
<dbReference type="Pfam" id="PF06472">
    <property type="entry name" value="ABC_membrane_2"/>
    <property type="match status" value="1"/>
</dbReference>
<dbReference type="Pfam" id="PF00005">
    <property type="entry name" value="ABC_tran"/>
    <property type="match status" value="1"/>
</dbReference>
<dbReference type="SMART" id="SM00382">
    <property type="entry name" value="AAA"/>
    <property type="match status" value="1"/>
</dbReference>
<dbReference type="SUPFAM" id="SSF90123">
    <property type="entry name" value="ABC transporter transmembrane region"/>
    <property type="match status" value="1"/>
</dbReference>
<dbReference type="SUPFAM" id="SSF52540">
    <property type="entry name" value="P-loop containing nucleoside triphosphate hydrolases"/>
    <property type="match status" value="1"/>
</dbReference>
<dbReference type="PROSITE" id="PS50929">
    <property type="entry name" value="ABC_TM1F"/>
    <property type="match status" value="1"/>
</dbReference>
<dbReference type="PROSITE" id="PS00211">
    <property type="entry name" value="ABC_TRANSPORTER_1"/>
    <property type="match status" value="1"/>
</dbReference>
<dbReference type="PROSITE" id="PS50893">
    <property type="entry name" value="ABC_TRANSPORTER_2"/>
    <property type="match status" value="1"/>
</dbReference>
<protein>
    <recommendedName>
        <fullName evidence="18">Lysosomal cobalamin transporter ABCD4</fullName>
        <ecNumber evidence="12 19 20">7.6.2.8</ecNumber>
    </recommendedName>
    <alternativeName>
        <fullName evidence="22">ATP-binding cassette sub-family D member 4</fullName>
    </alternativeName>
    <alternativeName>
        <fullName>PMP70-related protein</fullName>
        <shortName>P70R</shortName>
    </alternativeName>
    <alternativeName>
        <fullName>Peroxisomal membrane protein 1-like</fullName>
        <shortName>PXMP1-L</shortName>
    </alternativeName>
    <alternativeName>
        <fullName>Peroxisomal membrane protein 69</fullName>
        <shortName>PMP69</shortName>
    </alternativeName>
</protein>
<comment type="function">
    <text evidence="6 9 10 11 12 16">Lysosomal membrane protein that transports cobalamin (Vitamin B12) from the lysosomal lumen to the cytosol in an ATP-dependent manner (PubMed:22922874, PubMed:28572511, PubMed:31467407, PubMed:33845046). Targeted by LMBRD1 lysosomal chaperone from the endoplasmic reticulum to the lysosomal membrane (PubMed:27456980). Then forms a complex with lysosomal chaperone LMBRD1 and cytosolic MMACHC to transport cobalamin across the lysosomal membrane (PubMed:25535791).</text>
</comment>
<comment type="catalytic activity">
    <reaction evidence="12 19 20">
        <text>an R-cob(III)alamin(out) + ATP + H2O = an R-cob(III)alamin(in) + ADP + phosphate + H(+)</text>
        <dbReference type="Rhea" id="RHEA:17873"/>
        <dbReference type="ChEBI" id="CHEBI:15377"/>
        <dbReference type="ChEBI" id="CHEBI:15378"/>
        <dbReference type="ChEBI" id="CHEBI:30616"/>
        <dbReference type="ChEBI" id="CHEBI:43474"/>
        <dbReference type="ChEBI" id="CHEBI:140785"/>
        <dbReference type="ChEBI" id="CHEBI:456216"/>
        <dbReference type="EC" id="7.6.2.8"/>
    </reaction>
    <physiologicalReaction direction="left-to-right" evidence="21">
        <dbReference type="Rhea" id="RHEA:17874"/>
    </physiologicalReaction>
</comment>
<comment type="biophysicochemical properties">
    <kinetics>
        <KM evidence="12">426 uM for cobalamin</KM>
        <Vmax evidence="12">667.0 pmol/min/mg enzyme toward cobalamin</Vmax>
        <Vmax evidence="11">11.8 nmol/min/mg enzyme toward ATP</Vmax>
    </kinetics>
</comment>
<comment type="subunit">
    <text evidence="8 9 12">Homodimer or heterodimer (PubMed:27456980, PubMed:33845046). Interacts with LMBRD1; this interaction induces the translocation of ABCD4 from the ER to the lysosome membrane (PubMed:27456980, PubMed:28572511). Interacts with LMBRD1 and MMACHC; this interaction ensures the transport of cobalamin from the lysosome to the cytosol (PubMed:25535791).</text>
</comment>
<comment type="interaction">
    <interactant intactId="EBI-714396">
        <id>O14678</id>
    </interactant>
    <interactant intactId="EBI-714396">
        <id>O14678</id>
        <label>ABCD4</label>
    </interactant>
    <organismsDiffer>false</organismsDiffer>
    <experiments>2</experiments>
</comment>
<comment type="interaction">
    <interactant intactId="EBI-714396">
        <id>O14678</id>
    </interactant>
    <interactant intactId="EBI-6911574">
        <id>A2RU67</id>
        <label>FAM234B</label>
    </interactant>
    <organismsDiffer>false</organismsDiffer>
    <experiments>5</experiments>
</comment>
<comment type="interaction">
    <interactant intactId="EBI-714396">
        <id>O14678</id>
    </interactant>
    <interactant intactId="EBI-2805231">
        <id>Q9NUN5</id>
        <label>LMBRD1</label>
    </interactant>
    <organismsDiffer>false</organismsDiffer>
    <experiments>7</experiments>
</comment>
<comment type="subcellular location">
    <subcellularLocation>
        <location evidence="9">Endoplasmic reticulum membrane</location>
        <topology evidence="1">Multi-pass membrane protein</topology>
    </subcellularLocation>
    <subcellularLocation>
        <location evidence="6 8 9 10 12">Lysosome membrane</location>
        <topology evidence="1">Multi-pass membrane protein</topology>
    </subcellularLocation>
    <text evidence="9 10">Targeted by LMBRD1 lysosomal chaperone to the lysosomal membrane.</text>
</comment>
<comment type="tissue specificity">
    <text>Ubiquitous.</text>
</comment>
<comment type="disease" evidence="6 7 10 11 12">
    <disease id="DI-03558">
        <name>Methylmalonic aciduria and homocystinuria type cblJ</name>
        <acronym>MAHCJ</acronym>
        <description>A disorder of cobalamin metabolism characterized by decreased levels of the coenzymes adenosylcobalamin (AdoCbl) and methylcobalamin (MeCbl). Clinical features include feeding difficulties, poor growth, hypotonia, lethargy, anemia, and developmental delay.</description>
        <dbReference type="MIM" id="614857"/>
    </disease>
    <text>The disease is caused by variants affecting the gene represented in this entry.</text>
</comment>
<comment type="similarity">
    <text evidence="17">Belongs to the ABC transporter superfamily. ABCD family. Peroxisomal fatty acyl CoA transporter (TC 3.A.1.203) subfamily.</text>
</comment>
<comment type="caution">
    <text evidence="9 10 12 13">Originally proposed to be a peroxisomal protein (PubMed:9266848). Recent studies have suggested its localization to the endoplasmic reticulum and within the lysosome (PubMed:27456980).</text>
</comment>
<comment type="online information" name="ABCMdb">
    <link uri="http://abcm2.hegelab.org/search"/>
    <text>Database for mutations in ABC proteins</text>
</comment>
<gene>
    <name evidence="22" type="primary">ABCD4</name>
    <name type="synonym">PXMP1L</name>
</gene>
<sequence length="606" mass="68597">MAVAGPAPGAGARPRLDLQFLQRFLQILKVLFPSWSSQNALMFLTLLCLTLLEQFVIYQVGLIPSQYYGVLGNKDLEGFKTLTFLAVMLIVLNSTLKSFDQFTCNLLYVSWRKDLTEHLHRLYFRGRAYYTLNVLRDDIDNPDQRISQDVERFCRQLSSMASKLIISPFTLVYYTYQCFQSTGWLGPVSIFGYFILGTVVNKTLMGPIVMKLVHQEKLEGDFRFKHMQIRVNAEPAAFYRAGHVEHMRTDRRLQRLLQTQRELMSKELWLYIGINTFDYLGSILSYVVIAIPIFSGVYGDLSPAELSTLVSKNAFVCIYLISCFTQLIDLSTTLSDVAGYTHRIGQLRETLLDMSLKSQDCEILGESEWGLDTPPGWPAAEPADTAFLLERVSISAPSSDKPLIKDLSLKISEGQSLLITGNTGTGKTSLLRVLGGLWTSTRGSVQMLTDFGPHGVLFLPQKPFFTDGTLREQVIYPLKEVYPDSGSADDERILRFLELAGLSNLVARTEGLDQQVDWNWYDVLSPGEMQRLSFARLFYLQPKYAVLDEATSALTEEVESELYRIGQQLGMTFISVGHRQSLEKFHSLVLKLCGGGRWELMRIKVE</sequence>
<organism>
    <name type="scientific">Homo sapiens</name>
    <name type="common">Human</name>
    <dbReference type="NCBI Taxonomy" id="9606"/>
    <lineage>
        <taxon>Eukaryota</taxon>
        <taxon>Metazoa</taxon>
        <taxon>Chordata</taxon>
        <taxon>Craniata</taxon>
        <taxon>Vertebrata</taxon>
        <taxon>Euteleostomi</taxon>
        <taxon>Mammalia</taxon>
        <taxon>Eutheria</taxon>
        <taxon>Euarchontoglires</taxon>
        <taxon>Primates</taxon>
        <taxon>Haplorrhini</taxon>
        <taxon>Catarrhini</taxon>
        <taxon>Hominidae</taxon>
        <taxon>Homo</taxon>
    </lineage>
</organism>
<keyword id="KW-0002">3D-structure</keyword>
<keyword id="KW-0067">ATP-binding</keyword>
<keyword id="KW-0225">Disease variant</keyword>
<keyword id="KW-0256">Endoplasmic reticulum</keyword>
<keyword id="KW-0458">Lysosome</keyword>
<keyword id="KW-0472">Membrane</keyword>
<keyword id="KW-0547">Nucleotide-binding</keyword>
<keyword id="KW-1267">Proteomics identification</keyword>
<keyword id="KW-1185">Reference proteome</keyword>
<keyword id="KW-1278">Translocase</keyword>
<keyword id="KW-0812">Transmembrane</keyword>
<keyword id="KW-1133">Transmembrane helix</keyword>
<keyword id="KW-0813">Transport</keyword>
<feature type="chain" id="PRO_0000093312" description="Lysosomal cobalamin transporter ABCD4">
    <location>
        <begin position="1"/>
        <end position="606"/>
    </location>
</feature>
<feature type="transmembrane region" description="Helical" evidence="3">
    <location>
        <begin position="43"/>
        <end position="63"/>
    </location>
</feature>
<feature type="transmembrane region" description="Helical" evidence="3">
    <location>
        <begin position="76"/>
        <end position="96"/>
    </location>
</feature>
<feature type="transmembrane region" description="Helical" evidence="3">
    <location>
        <begin position="190"/>
        <end position="210"/>
    </location>
</feature>
<feature type="transmembrane region" description="Helical" evidence="3">
    <location>
        <begin position="279"/>
        <end position="299"/>
    </location>
</feature>
<feature type="transmembrane region" description="Helical" evidence="3">
    <location>
        <begin position="314"/>
        <end position="334"/>
    </location>
</feature>
<feature type="domain" description="ABC transmembrane type-1" evidence="3">
    <location>
        <begin position="39"/>
        <end position="332"/>
    </location>
</feature>
<feature type="domain" description="ABC transporter" evidence="2">
    <location>
        <begin position="389"/>
        <end position="603"/>
    </location>
</feature>
<feature type="binding site" evidence="2">
    <location>
        <begin position="421"/>
        <end position="428"/>
    </location>
    <ligand>
        <name>ATP</name>
        <dbReference type="ChEBI" id="CHEBI:30616"/>
    </ligand>
</feature>
<feature type="sequence variant" id="VAR_084972" description="In MAHCJ; does not affect ATPase activity. Loss of cobalamin transport activity. Decreases interaction with LMBD1. Does not affect lysosomal subcellular location; dbSNP:rs776529140." evidence="7 10 12">
    <original>N</original>
    <variation>K</variation>
    <location>
        <position position="141"/>
    </location>
</feature>
<feature type="sequence variant" id="VAR_048134" description="In dbSNP:rs34992370.">
    <original>V</original>
    <variation>I</variation>
    <location>
        <position position="172"/>
    </location>
</feature>
<feature type="sequence variant" id="VAR_020778" description="In dbSNP:rs4148077." evidence="4 5 14 15">
    <original>A</original>
    <variation>T</variation>
    <location>
        <position position="304"/>
    </location>
</feature>
<feature type="sequence variant" id="VAR_069097" description="In MAHCJ; strong decrease of ATPase activity. Strong decrease of cobalamin transport activity; dbSNP:rs201777056." evidence="6 11 12">
    <original>Y</original>
    <variation>C</variation>
    <location>
        <position position="319"/>
    </location>
</feature>
<feature type="sequence variant" id="VAR_048135" description="In dbSNP:rs35073715.">
    <original>T</original>
    <variation>R</variation>
    <location>
        <position position="350"/>
    </location>
</feature>
<feature type="sequence variant" id="VAR_020222" description="In dbSNP:rs3742801." evidence="4 5 14 15">
    <original>E</original>
    <variation>K</variation>
    <location>
        <position position="368"/>
    </location>
</feature>
<feature type="sequence variant" id="VAR_084973" description="In MAHCJ; decreases interaction with LMBD1. Does not affect lysosomal subcellular location. Decreases ATPase activity; dbSNP:rs745414252." evidence="10 11">
    <original>R</original>
    <variation>Q</variation>
    <location>
        <position position="432"/>
    </location>
</feature>
<feature type="mutagenesis site" description="Does not affect ATPase nor cobalamin transport activities." evidence="12">
    <original>N</original>
    <variation>A</variation>
    <variation>D</variation>
    <location>
        <position position="141"/>
    </location>
</feature>
<feature type="mutagenesis site" description="Decreases of ATPase activity. Decreases cobalamin transport activity." evidence="12">
    <original>Y</original>
    <variation>A</variation>
    <location>
        <position position="319"/>
    </location>
</feature>
<feature type="mutagenesis site" description="Does not affect ATPase activity. Does not affect cobalamin transport activity." evidence="12">
    <original>Y</original>
    <variation>F</variation>
    <location>
        <position position="319"/>
    </location>
</feature>
<feature type="mutagenesis site" description="Decreases interaction with LMBD1. Decreases colocalization with LMBD1. Decreases cobalamin transport activity." evidence="10">
    <original>G</original>
    <variation>A</variation>
    <location>
        <position position="426"/>
    </location>
</feature>
<feature type="mutagenesis site" description="Loss of ATPase activity. Loss of cobalamin transport activity." evidence="12">
    <original>K</original>
    <variation>A</variation>
    <location>
        <position position="427"/>
    </location>
</feature>
<feature type="mutagenesis site" description="Decreases interaction with LMBD1. Decreases colocalization with LMBD1. Decreases cobalamin transport activity. Reduces synthesis of adenosylcobalamin and methylcobalamin." evidence="6 10">
    <original>K</original>
    <variation>L</variation>
    <location>
        <position position="427"/>
    </location>
</feature>
<feature type="mutagenesis site" description="Decreases interaction with LMBD1. Reduces synthesis of adenosylcobalamin and methylcobalamin." evidence="6 10">
    <original>D</original>
    <variation>N</variation>
    <location>
        <position position="548"/>
    </location>
</feature>
<feature type="mutagenesis site" description="Decreases ATPase activity. Reduces synthesis of adenosylcobalamin and methylcobalamin." evidence="6 11">
    <original>E</original>
    <variation>Q</variation>
    <location>
        <position position="549"/>
    </location>
</feature>
<feature type="sequence conflict" description="In Ref. 5; BAF84021." evidence="17" ref="5">
    <original>G</original>
    <variation>V</variation>
    <location>
        <position position="594"/>
    </location>
</feature>
<feature type="sequence conflict" description="In Ref. 8; CAG33385." evidence="17" ref="8">
    <original>E</original>
    <variation>D</variation>
    <location>
        <position position="606"/>
    </location>
</feature>
<reference key="1">
    <citation type="journal article" date="1997" name="Biochem. Biophys. Res. Commun.">
        <title>Primary structure of human PMP69, a putative peroxisomal ABC-transporter.</title>
        <authorList>
            <person name="Holzinger A."/>
            <person name="Kammerer S."/>
            <person name="Roscher A.A."/>
        </authorList>
    </citation>
    <scope>NUCLEOTIDE SEQUENCE [MRNA]</scope>
</reference>
<reference key="2">
    <citation type="journal article" date="1998" name="FEBS Lett.">
        <title>Genomic organization and chromosomal localization of the human peroxisomal membrane protein-1-like protein (PXMP1-L) gene encoding a peroxisomal ABC transporter.</title>
        <authorList>
            <person name="Holzinger A."/>
            <person name="Roscher A.A."/>
            <person name="Landgraf P."/>
            <person name="Lichtner P."/>
            <person name="Kammerer S."/>
        </authorList>
    </citation>
    <scope>NUCLEOTIDE SEQUENCE [GENOMIC DNA / MRNA]</scope>
</reference>
<reference key="3">
    <citation type="journal article" date="1997" name="Hum. Mol. Genet.">
        <title>Identification of a fourth half ABC transporter in the human peroxisomal membrane.</title>
        <authorList>
            <person name="Shani N."/>
            <person name="Jimenez-Sanchez G."/>
            <person name="Steel G."/>
            <person name="Dean M."/>
            <person name="Valle D."/>
        </authorList>
    </citation>
    <scope>NUCLEOTIDE SEQUENCE [MRNA]</scope>
</reference>
<reference key="4">
    <citation type="submission" date="2003-05" db="EMBL/GenBank/DDBJ databases">
        <title>Cloning of human full-length CDSs in BD Creator(TM) system donor vector.</title>
        <authorList>
            <person name="Kalnine N."/>
            <person name="Chen X."/>
            <person name="Rolfs A."/>
            <person name="Halleck A."/>
            <person name="Hines L."/>
            <person name="Eisenstein S."/>
            <person name="Koundinya M."/>
            <person name="Raphael J."/>
            <person name="Moreira D."/>
            <person name="Kelley T."/>
            <person name="LaBaer J."/>
            <person name="Lin Y."/>
            <person name="Phelan M."/>
            <person name="Farmer A."/>
        </authorList>
    </citation>
    <scope>NUCLEOTIDE SEQUENCE [LARGE SCALE MRNA]</scope>
    <scope>VARIANTS THR-304 AND LYS-368</scope>
</reference>
<reference key="5">
    <citation type="journal article" date="2004" name="Nat. Genet.">
        <title>Complete sequencing and characterization of 21,243 full-length human cDNAs.</title>
        <authorList>
            <person name="Ota T."/>
            <person name="Suzuki Y."/>
            <person name="Nishikawa T."/>
            <person name="Otsuki T."/>
            <person name="Sugiyama T."/>
            <person name="Irie R."/>
            <person name="Wakamatsu A."/>
            <person name="Hayashi K."/>
            <person name="Sato H."/>
            <person name="Nagai K."/>
            <person name="Kimura K."/>
            <person name="Makita H."/>
            <person name="Sekine M."/>
            <person name="Obayashi M."/>
            <person name="Nishi T."/>
            <person name="Shibahara T."/>
            <person name="Tanaka T."/>
            <person name="Ishii S."/>
            <person name="Yamamoto J."/>
            <person name="Saito K."/>
            <person name="Kawai Y."/>
            <person name="Isono Y."/>
            <person name="Nakamura Y."/>
            <person name="Nagahari K."/>
            <person name="Murakami K."/>
            <person name="Yasuda T."/>
            <person name="Iwayanagi T."/>
            <person name="Wagatsuma M."/>
            <person name="Shiratori A."/>
            <person name="Sudo H."/>
            <person name="Hosoiri T."/>
            <person name="Kaku Y."/>
            <person name="Kodaira H."/>
            <person name="Kondo H."/>
            <person name="Sugawara M."/>
            <person name="Takahashi M."/>
            <person name="Kanda K."/>
            <person name="Yokoi T."/>
            <person name="Furuya T."/>
            <person name="Kikkawa E."/>
            <person name="Omura Y."/>
            <person name="Abe K."/>
            <person name="Kamihara K."/>
            <person name="Katsuta N."/>
            <person name="Sato K."/>
            <person name="Tanikawa M."/>
            <person name="Yamazaki M."/>
            <person name="Ninomiya K."/>
            <person name="Ishibashi T."/>
            <person name="Yamashita H."/>
            <person name="Murakawa K."/>
            <person name="Fujimori K."/>
            <person name="Tanai H."/>
            <person name="Kimata M."/>
            <person name="Watanabe M."/>
            <person name="Hiraoka S."/>
            <person name="Chiba Y."/>
            <person name="Ishida S."/>
            <person name="Ono Y."/>
            <person name="Takiguchi S."/>
            <person name="Watanabe S."/>
            <person name="Yosida M."/>
            <person name="Hotuta T."/>
            <person name="Kusano J."/>
            <person name="Kanehori K."/>
            <person name="Takahashi-Fujii A."/>
            <person name="Hara H."/>
            <person name="Tanase T.-O."/>
            <person name="Nomura Y."/>
            <person name="Togiya S."/>
            <person name="Komai F."/>
            <person name="Hara R."/>
            <person name="Takeuchi K."/>
            <person name="Arita M."/>
            <person name="Imose N."/>
            <person name="Musashino K."/>
            <person name="Yuuki H."/>
            <person name="Oshima A."/>
            <person name="Sasaki N."/>
            <person name="Aotsuka S."/>
            <person name="Yoshikawa Y."/>
            <person name="Matsunawa H."/>
            <person name="Ichihara T."/>
            <person name="Shiohata N."/>
            <person name="Sano S."/>
            <person name="Moriya S."/>
            <person name="Momiyama H."/>
            <person name="Satoh N."/>
            <person name="Takami S."/>
            <person name="Terashima Y."/>
            <person name="Suzuki O."/>
            <person name="Nakagawa S."/>
            <person name="Senoh A."/>
            <person name="Mizoguchi H."/>
            <person name="Goto Y."/>
            <person name="Shimizu F."/>
            <person name="Wakebe H."/>
            <person name="Hishigaki H."/>
            <person name="Watanabe T."/>
            <person name="Sugiyama A."/>
            <person name="Takemoto M."/>
            <person name="Kawakami B."/>
            <person name="Yamazaki M."/>
            <person name="Watanabe K."/>
            <person name="Kumagai A."/>
            <person name="Itakura S."/>
            <person name="Fukuzumi Y."/>
            <person name="Fujimori Y."/>
            <person name="Komiyama M."/>
            <person name="Tashiro H."/>
            <person name="Tanigami A."/>
            <person name="Fujiwara T."/>
            <person name="Ono T."/>
            <person name="Yamada K."/>
            <person name="Fujii Y."/>
            <person name="Ozaki K."/>
            <person name="Hirao M."/>
            <person name="Ohmori Y."/>
            <person name="Kawabata A."/>
            <person name="Hikiji T."/>
            <person name="Kobatake N."/>
            <person name="Inagaki H."/>
            <person name="Ikema Y."/>
            <person name="Okamoto S."/>
            <person name="Okitani R."/>
            <person name="Kawakami T."/>
            <person name="Noguchi S."/>
            <person name="Itoh T."/>
            <person name="Shigeta K."/>
            <person name="Senba T."/>
            <person name="Matsumura K."/>
            <person name="Nakajima Y."/>
            <person name="Mizuno T."/>
            <person name="Morinaga M."/>
            <person name="Sasaki M."/>
            <person name="Togashi T."/>
            <person name="Oyama M."/>
            <person name="Hata H."/>
            <person name="Watanabe M."/>
            <person name="Komatsu T."/>
            <person name="Mizushima-Sugano J."/>
            <person name="Satoh T."/>
            <person name="Shirai Y."/>
            <person name="Takahashi Y."/>
            <person name="Nakagawa K."/>
            <person name="Okumura K."/>
            <person name="Nagase T."/>
            <person name="Nomura N."/>
            <person name="Kikuchi H."/>
            <person name="Masuho Y."/>
            <person name="Yamashita R."/>
            <person name="Nakai K."/>
            <person name="Yada T."/>
            <person name="Nakamura Y."/>
            <person name="Ohara O."/>
            <person name="Isogai T."/>
            <person name="Sugano S."/>
        </authorList>
    </citation>
    <scope>NUCLEOTIDE SEQUENCE [LARGE SCALE MRNA]</scope>
    <source>
        <tissue>Tongue</tissue>
    </source>
</reference>
<reference key="6">
    <citation type="journal article" date="2014" name="Mol. Membr. Biol.">
        <title>Purification and interaction analyses of two human lysosomal vitamin B12 transporters: LMBD1 and ABCD4.</title>
        <authorList>
            <person name="Deme J.C."/>
            <person name="Hancock M.A."/>
            <person name="Xia X."/>
            <person name="Shintre C.A."/>
            <person name="Plesa M."/>
            <person name="Kim J.C."/>
            <person name="Carpenter E.P."/>
            <person name="Rosenblatt D.S."/>
            <person name="Coulton J.W."/>
        </authorList>
    </citation>
    <scope>FUNCTION</scope>
    <scope>INTERACTION WITH LMBRD1 AND MMACHC</scope>
    <scope>SUBCELLULAR LOCATION</scope>
</reference>
<reference key="7">
    <citation type="journal article" date="2016" name="Sci. Rep.">
        <title>Translocation of the ABC transporter ABCD4 from the endoplasmic reticulum to lysosomes requires the escort protein LMBD1.</title>
        <authorList>
            <person name="Kawaguchi K."/>
            <person name="Okamoto T."/>
            <person name="Morita M."/>
            <person name="Imanaka T."/>
        </authorList>
    </citation>
    <scope>FUNCTION</scope>
    <scope>SUBCELLULAR LOCATION</scope>
    <scope>INTERACTION WITH LMBRD1</scope>
</reference>
<reference key="8">
    <citation type="submission" date="2004-06" db="EMBL/GenBank/DDBJ databases">
        <title>Cloning of human full open reading frames in Gateway(TM) system entry vector (pDONR201).</title>
        <authorList>
            <person name="Ebert L."/>
            <person name="Schick M."/>
            <person name="Neubert P."/>
            <person name="Schatten R."/>
            <person name="Henze S."/>
            <person name="Korn B."/>
        </authorList>
    </citation>
    <scope>NUCLEOTIDE SEQUENCE [LARGE SCALE MRNA]</scope>
    <scope>VARIANTS THR-304 AND LYS-368</scope>
</reference>
<reference key="9">
    <citation type="journal article" date="2004" name="Genome Res.">
        <title>The status, quality, and expansion of the NIH full-length cDNA project: the Mammalian Gene Collection (MGC).</title>
        <authorList>
            <consortium name="The MGC Project Team"/>
        </authorList>
    </citation>
    <scope>NUCLEOTIDE SEQUENCE [LARGE SCALE MRNA]</scope>
    <scope>VARIANTS THR-304 AND LYS-368</scope>
    <source>
        <tissue>Muscle</tissue>
    </source>
</reference>
<reference key="10">
    <citation type="journal article" date="2012" name="Nat. Genet.">
        <title>Mutations in ABCD4 cause a new inborn error of vitamin B12 metabolism.</title>
        <authorList>
            <person name="Coelho D."/>
            <person name="Kim J.C."/>
            <person name="Miousse I.R."/>
            <person name="Fung S."/>
            <person name="du Moulin M."/>
            <person name="Buers I."/>
            <person name="Suormala T."/>
            <person name="Burda P."/>
            <person name="Frapolli M."/>
            <person name="Stucki M."/>
            <person name="Nurnberg P."/>
            <person name="Thiele H."/>
            <person name="Robenek H."/>
            <person name="Hohne W."/>
            <person name="Longo N."/>
            <person name="Pasquali M."/>
            <person name="Mengel E."/>
            <person name="Watkins D."/>
            <person name="Shoubridge E.A."/>
            <person name="Majewski J."/>
            <person name="Rosenblatt D.S."/>
            <person name="Fowler B."/>
            <person name="Rutsch F."/>
            <person name="Baumgartner M.R."/>
        </authorList>
    </citation>
    <scope>FUNCTION</scope>
    <scope>VARIANT MAHCJ CYS-319</scope>
    <scope>INVOLVEMENT IN MAHCJ</scope>
    <scope>MUTAGENESIS OF LYS-427; ASP-548 AND GLU-549</scope>
    <scope>SUBCELLULAR LOCATION</scope>
</reference>
<reference key="11">
    <citation type="journal article" date="2017" name="J. Biol. Chem.">
        <title>Clinical or ATPase domain mutations in ABCD4 disrupt the interaction between the vitamin B12-trafficking proteins ABCD4 and LMBD1.</title>
        <authorList>
            <person name="Fettelschoss V."/>
            <person name="Burda P."/>
            <person name="Sagne C."/>
            <person name="Coelho D."/>
            <person name="De Laet C."/>
            <person name="Lutz S."/>
            <person name="Suormala T."/>
            <person name="Fowler B."/>
            <person name="Pietrancosta N."/>
            <person name="Gasnier B."/>
            <person name="Bornhauser B."/>
            <person name="Froese D.S."/>
            <person name="Baumgartner M.R."/>
        </authorList>
    </citation>
    <scope>INVOLVEMENT IN MAHCJ</scope>
    <scope>VARIANT MAHCJ GLN-432</scope>
    <scope>CHARACTERIZATION OF VARIANTS MAHCJ LYS-141 AND GLN-432</scope>
    <scope>SUBCELLULAR LOCATION</scope>
    <scope>INTERACTION WITH LMBRD1</scope>
    <scope>MUTAGENESIS OF GLY-426; LYS-427 AND ASP-548</scope>
    <scope>FUNCTION</scope>
    <scope>CATALYTIC ACTIVITY</scope>
</reference>
<reference key="12">
    <citation type="journal article" date="2021" name="J. Biol. Chem.">
        <title>The lysosomal protein ABCD4 can transport vitamin B12 across liposomal membranes in vitro.</title>
        <authorList>
            <person name="Kitai K."/>
            <person name="Kawaguchi K."/>
            <person name="Tomohiro T."/>
            <person name="Morita M."/>
            <person name="So T."/>
            <person name="Imanaka T."/>
        </authorList>
    </citation>
    <scope>CATALYTIC ACTIVITY</scope>
    <scope>FUNCTION</scope>
    <scope>BIOPHYSICOCHEMICAL PROPERTIES</scope>
    <scope>MUTAGENESIS OF ASN-141; TYR-319 AND LYS-427</scope>
    <scope>SUBCELLULAR LOCATION</scope>
    <scope>INTERACTION WITH LMBRD1</scope>
    <scope>CHARACTERIZATION OF VARIANTS MAHCJ CYS-319 AND ASN-141</scope>
    <scope>SUBUNIT</scope>
</reference>
<reference key="13">
    <citation type="journal article" date="2002" name="J. Hum. Genet.">
        <title>Catalog of 605 single-nucleotide polymorphisms (SNPs) among 13 genes encoding human ATP-binding cassette transporters: ABCA4, ABCA7, ABCA8, ABCD1, ABCD3, ABCD4, ABCE1, ABCF1, ABCG1, ABCG2, ABCG4, ABCG5, and ABCG8.</title>
        <authorList>
            <person name="Iida A."/>
            <person name="Saito S."/>
            <person name="Sekine A."/>
            <person name="Mishima C."/>
            <person name="Kitamura Y."/>
            <person name="Kondo K."/>
            <person name="Harigae S."/>
            <person name="Osawa S."/>
            <person name="Nakamura Y."/>
        </authorList>
    </citation>
    <scope>VARIANTS THR-304 AND LYS-368</scope>
</reference>
<reference key="14">
    <citation type="journal article" date="2012" name="Mol. Genet. Metab.">
        <title>Late onset of symptoms in an atypical patient with the cblJ inborn error of vitamin B12 metabolism: diagnosis and novel mutation revealed by exome sequencing.</title>
        <authorList>
            <person name="Kim J.C."/>
            <person name="Lee N.C."/>
            <person name="Hwu P.W."/>
            <person name="Chien Y.H."/>
            <person name="Fahiminiya S."/>
            <person name="Majewski J."/>
            <person name="Watkins D."/>
            <person name="Rosenblatt D.S."/>
        </authorList>
    </citation>
    <scope>VARIANT MAHCJ LYS-141</scope>
    <scope>INVOLVEMENT IN MAHCJ</scope>
</reference>
<reference evidence="23" key="15">
    <citation type="journal article" date="2019" name="Cell Res.">
        <title>Cryo-EM structure of human lysosomal cobalamin exporter ABCD4.</title>
        <authorList>
            <person name="Xu D."/>
            <person name="Feng Z."/>
            <person name="Hou W.T."/>
            <person name="Jiang Y.L."/>
            <person name="Wang L."/>
            <person name="Sun L."/>
            <person name="Zhou C.Z."/>
            <person name="Chen Y."/>
        </authorList>
    </citation>
    <scope>STRUCTURE BY ELECTRON MICROSCOPY (3.60 ANGSTROMS) OF 2-606</scope>
    <scope>CHARACTERIZATION OF VARIANTS MAHCJ CYS-319 AND GLN-432</scope>
    <scope>MUTAGENESIS OF GLU-549</scope>
    <scope>FUNCTION</scope>
    <scope>CATALYTIC ACTIVITY</scope>
    <scope>BIOPHYSICOCHEMICAL PROPERTIES</scope>
</reference>
<accession>O14678</accession>
<accession>A8K5L7</accession>
<accession>Q6IAQ0</accession>
<accession>Q96E75</accession>
<evidence type="ECO:0000255" key="1"/>
<evidence type="ECO:0000255" key="2">
    <source>
        <dbReference type="PROSITE-ProRule" id="PRU00434"/>
    </source>
</evidence>
<evidence type="ECO:0000255" key="3">
    <source>
        <dbReference type="PROSITE-ProRule" id="PRU00441"/>
    </source>
</evidence>
<evidence type="ECO:0000269" key="4">
    <source>
    </source>
</evidence>
<evidence type="ECO:0000269" key="5">
    <source>
    </source>
</evidence>
<evidence type="ECO:0000269" key="6">
    <source>
    </source>
</evidence>
<evidence type="ECO:0000269" key="7">
    <source>
    </source>
</evidence>
<evidence type="ECO:0000269" key="8">
    <source>
    </source>
</evidence>
<evidence type="ECO:0000269" key="9">
    <source>
    </source>
</evidence>
<evidence type="ECO:0000269" key="10">
    <source>
    </source>
</evidence>
<evidence type="ECO:0000269" key="11">
    <source>
    </source>
</evidence>
<evidence type="ECO:0000269" key="12">
    <source>
    </source>
</evidence>
<evidence type="ECO:0000269" key="13">
    <source>
    </source>
</evidence>
<evidence type="ECO:0000269" key="14">
    <source ref="4"/>
</evidence>
<evidence type="ECO:0000269" key="15">
    <source ref="8"/>
</evidence>
<evidence type="ECO:0000303" key="16">
    <source>
    </source>
</evidence>
<evidence type="ECO:0000305" key="17"/>
<evidence type="ECO:0000305" key="18">
    <source>
    </source>
</evidence>
<evidence type="ECO:0000305" key="19">
    <source>
    </source>
</evidence>
<evidence type="ECO:0000305" key="20">
    <source>
    </source>
</evidence>
<evidence type="ECO:0000305" key="21">
    <source>
    </source>
</evidence>
<evidence type="ECO:0000312" key="22">
    <source>
        <dbReference type="HGNC" id="HGNC:68"/>
    </source>
</evidence>
<evidence type="ECO:0007744" key="23">
    <source>
        <dbReference type="PDB" id="6JBJ"/>
    </source>
</evidence>
<proteinExistence type="evidence at protein level"/>